<name>NUOB_THET2</name>
<accession>Q72GC9</accession>
<proteinExistence type="inferred from homology"/>
<dbReference type="EC" id="7.1.1.-"/>
<dbReference type="EMBL" id="AE017221">
    <property type="protein sequence ID" value="AAS82261.1"/>
    <property type="molecule type" value="Genomic_DNA"/>
</dbReference>
<dbReference type="RefSeq" id="WP_011174271.1">
    <property type="nucleotide sequence ID" value="NC_005835.1"/>
</dbReference>
<dbReference type="SMR" id="Q72GC9"/>
<dbReference type="GeneID" id="3168381"/>
<dbReference type="KEGG" id="tth:TT_C1919"/>
<dbReference type="eggNOG" id="COG0377">
    <property type="taxonomic scope" value="Bacteria"/>
</dbReference>
<dbReference type="HOGENOM" id="CLU_055737_7_3_0"/>
<dbReference type="OrthoDB" id="9786737at2"/>
<dbReference type="Proteomes" id="UP000000592">
    <property type="component" value="Chromosome"/>
</dbReference>
<dbReference type="GO" id="GO:0005886">
    <property type="term" value="C:plasma membrane"/>
    <property type="evidence" value="ECO:0007669"/>
    <property type="project" value="UniProtKB-SubCell"/>
</dbReference>
<dbReference type="GO" id="GO:0045271">
    <property type="term" value="C:respiratory chain complex I"/>
    <property type="evidence" value="ECO:0007669"/>
    <property type="project" value="TreeGrafter"/>
</dbReference>
<dbReference type="GO" id="GO:0051539">
    <property type="term" value="F:4 iron, 4 sulfur cluster binding"/>
    <property type="evidence" value="ECO:0007669"/>
    <property type="project" value="UniProtKB-KW"/>
</dbReference>
<dbReference type="GO" id="GO:0005506">
    <property type="term" value="F:iron ion binding"/>
    <property type="evidence" value="ECO:0007669"/>
    <property type="project" value="UniProtKB-UniRule"/>
</dbReference>
<dbReference type="GO" id="GO:0008137">
    <property type="term" value="F:NADH dehydrogenase (ubiquinone) activity"/>
    <property type="evidence" value="ECO:0007669"/>
    <property type="project" value="InterPro"/>
</dbReference>
<dbReference type="GO" id="GO:0050136">
    <property type="term" value="F:NADH:ubiquinone reductase (non-electrogenic) activity"/>
    <property type="evidence" value="ECO:0007669"/>
    <property type="project" value="UniProtKB-UniRule"/>
</dbReference>
<dbReference type="GO" id="GO:0048038">
    <property type="term" value="F:quinone binding"/>
    <property type="evidence" value="ECO:0007669"/>
    <property type="project" value="UniProtKB-KW"/>
</dbReference>
<dbReference type="GO" id="GO:0009060">
    <property type="term" value="P:aerobic respiration"/>
    <property type="evidence" value="ECO:0007669"/>
    <property type="project" value="TreeGrafter"/>
</dbReference>
<dbReference type="GO" id="GO:0015990">
    <property type="term" value="P:electron transport coupled proton transport"/>
    <property type="evidence" value="ECO:0007669"/>
    <property type="project" value="TreeGrafter"/>
</dbReference>
<dbReference type="FunFam" id="3.40.50.12280:FF:000004">
    <property type="entry name" value="NADH-quinone oxidoreductase subunit B"/>
    <property type="match status" value="1"/>
</dbReference>
<dbReference type="Gene3D" id="3.40.50.12280">
    <property type="match status" value="1"/>
</dbReference>
<dbReference type="HAMAP" id="MF_01356">
    <property type="entry name" value="NDH1_NuoB"/>
    <property type="match status" value="1"/>
</dbReference>
<dbReference type="InterPro" id="IPR006137">
    <property type="entry name" value="NADH_UbQ_OxRdtase-like_20kDa"/>
</dbReference>
<dbReference type="InterPro" id="IPR006138">
    <property type="entry name" value="NADH_UQ_OxRdtase_20Kd_su"/>
</dbReference>
<dbReference type="NCBIfam" id="TIGR01957">
    <property type="entry name" value="nuoB_fam"/>
    <property type="match status" value="1"/>
</dbReference>
<dbReference type="NCBIfam" id="NF005012">
    <property type="entry name" value="PRK06411.1"/>
    <property type="match status" value="1"/>
</dbReference>
<dbReference type="PANTHER" id="PTHR11995">
    <property type="entry name" value="NADH DEHYDROGENASE"/>
    <property type="match status" value="1"/>
</dbReference>
<dbReference type="PANTHER" id="PTHR11995:SF14">
    <property type="entry name" value="NADH DEHYDROGENASE [UBIQUINONE] IRON-SULFUR PROTEIN 7, MITOCHONDRIAL"/>
    <property type="match status" value="1"/>
</dbReference>
<dbReference type="Pfam" id="PF01058">
    <property type="entry name" value="Oxidored_q6"/>
    <property type="match status" value="1"/>
</dbReference>
<dbReference type="SUPFAM" id="SSF56770">
    <property type="entry name" value="HydA/Nqo6-like"/>
    <property type="match status" value="1"/>
</dbReference>
<dbReference type="PROSITE" id="PS01150">
    <property type="entry name" value="COMPLEX1_20K"/>
    <property type="match status" value="1"/>
</dbReference>
<organism>
    <name type="scientific">Thermus thermophilus (strain ATCC BAA-163 / DSM 7039 / HB27)</name>
    <dbReference type="NCBI Taxonomy" id="262724"/>
    <lineage>
        <taxon>Bacteria</taxon>
        <taxon>Thermotogati</taxon>
        <taxon>Deinococcota</taxon>
        <taxon>Deinococci</taxon>
        <taxon>Thermales</taxon>
        <taxon>Thermaceae</taxon>
        <taxon>Thermus</taxon>
    </lineage>
</organism>
<feature type="chain" id="PRO_0000358501" description="NADH-quinone oxidoreductase subunit B">
    <location>
        <begin position="1"/>
        <end position="181"/>
    </location>
</feature>
<feature type="binding site" evidence="1">
    <location>
        <position position="45"/>
    </location>
    <ligand>
        <name>[4Fe-4S] cluster</name>
        <dbReference type="ChEBI" id="CHEBI:49883"/>
    </ligand>
</feature>
<feature type="binding site" evidence="1">
    <location>
        <position position="46"/>
    </location>
    <ligand>
        <name>[4Fe-4S] cluster</name>
        <dbReference type="ChEBI" id="CHEBI:49883"/>
    </ligand>
</feature>
<feature type="binding site" evidence="1">
    <location>
        <position position="111"/>
    </location>
    <ligand>
        <name>[4Fe-4S] cluster</name>
        <dbReference type="ChEBI" id="CHEBI:49883"/>
    </ligand>
</feature>
<feature type="binding site" evidence="1">
    <location>
        <position position="140"/>
    </location>
    <ligand>
        <name>[4Fe-4S] cluster</name>
        <dbReference type="ChEBI" id="CHEBI:49883"/>
    </ligand>
</feature>
<protein>
    <recommendedName>
        <fullName>NADH-quinone oxidoreductase subunit B</fullName>
        <ecNumber>7.1.1.-</ecNumber>
    </recommendedName>
    <alternativeName>
        <fullName>NADH dehydrogenase I subunit B</fullName>
    </alternativeName>
    <alternativeName>
        <fullName>NDH-1 subunit B</fullName>
    </alternativeName>
</protein>
<gene>
    <name type="primary">nuoB</name>
    <name type="ordered locus">TT_C1919</name>
</gene>
<comment type="function">
    <text evidence="1">NDH-1 shuttles electrons from NADH, via FMN and iron-sulfur (Fe-S) centers, to quinones in the respiratory chain. The immediate electron acceptor for the enzyme in this species is believed to be ubiquinone. Couples the redox reaction to proton translocation (for every two electrons transferred, four hydrogen ions are translocated across the cytoplasmic membrane), and thus conserves the redox energy in a proton gradient.</text>
</comment>
<comment type="catalytic activity">
    <reaction>
        <text>a quinone + NADH + 5 H(+)(in) = a quinol + NAD(+) + 4 H(+)(out)</text>
        <dbReference type="Rhea" id="RHEA:57888"/>
        <dbReference type="ChEBI" id="CHEBI:15378"/>
        <dbReference type="ChEBI" id="CHEBI:24646"/>
        <dbReference type="ChEBI" id="CHEBI:57540"/>
        <dbReference type="ChEBI" id="CHEBI:57945"/>
        <dbReference type="ChEBI" id="CHEBI:132124"/>
    </reaction>
</comment>
<comment type="cofactor">
    <cofactor evidence="1">
        <name>[4Fe-4S] cluster</name>
        <dbReference type="ChEBI" id="CHEBI:49883"/>
    </cofactor>
    <text evidence="1">Binds 1 [4Fe-4S] cluster.</text>
</comment>
<comment type="subunit">
    <text evidence="1">NDH-1 is composed of 14 different subunits. Subunits NuoB, C, D, E, F, and G constitute the peripheral sector of the complex (By similarity).</text>
</comment>
<comment type="subcellular location">
    <subcellularLocation>
        <location evidence="1">Cell inner membrane</location>
        <topology evidence="1">Peripheral membrane protein</topology>
        <orientation evidence="1">Cytoplasmic side</orientation>
    </subcellularLocation>
</comment>
<comment type="similarity">
    <text evidence="2">Belongs to the complex I 20 kDa subunit family.</text>
</comment>
<evidence type="ECO:0000250" key="1"/>
<evidence type="ECO:0000305" key="2"/>
<sequence>MALKDLFERDVQELEREGILFTTLEKLVAWGRSNSLWPATFGLACCAIEMMASTDARNDLARFGSEVFRASPRQADVMIVAGRLSKKMAPVMRRVWEQMPDPKWVISMGACASSGGMFNNYAIVQNVDSVVPVDVYVPGCPPRPEALIYAVMQLQKKVRGQAYNERGERLPPVAAWKRTRG</sequence>
<reference key="1">
    <citation type="journal article" date="2004" name="Nat. Biotechnol.">
        <title>The genome sequence of the extreme thermophile Thermus thermophilus.</title>
        <authorList>
            <person name="Henne A."/>
            <person name="Brueggemann H."/>
            <person name="Raasch C."/>
            <person name="Wiezer A."/>
            <person name="Hartsch T."/>
            <person name="Liesegang H."/>
            <person name="Johann A."/>
            <person name="Lienard T."/>
            <person name="Gohl O."/>
            <person name="Martinez-Arias R."/>
            <person name="Jacobi C."/>
            <person name="Starkuviene V."/>
            <person name="Schlenczeck S."/>
            <person name="Dencker S."/>
            <person name="Huber R."/>
            <person name="Klenk H.-P."/>
            <person name="Kramer W."/>
            <person name="Merkl R."/>
            <person name="Gottschalk G."/>
            <person name="Fritz H.-J."/>
        </authorList>
    </citation>
    <scope>NUCLEOTIDE SEQUENCE [LARGE SCALE GENOMIC DNA]</scope>
    <source>
        <strain>ATCC BAA-163 / DSM 7039 / HB27</strain>
    </source>
</reference>
<keyword id="KW-0004">4Fe-4S</keyword>
<keyword id="KW-0997">Cell inner membrane</keyword>
<keyword id="KW-1003">Cell membrane</keyword>
<keyword id="KW-0408">Iron</keyword>
<keyword id="KW-0411">Iron-sulfur</keyword>
<keyword id="KW-0472">Membrane</keyword>
<keyword id="KW-0479">Metal-binding</keyword>
<keyword id="KW-0520">NAD</keyword>
<keyword id="KW-0874">Quinone</keyword>
<keyword id="KW-1278">Translocase</keyword>